<reference key="1">
    <citation type="journal article" date="1995" name="Science">
        <title>Whole-genome random sequencing and assembly of Haemophilus influenzae Rd.</title>
        <authorList>
            <person name="Fleischmann R.D."/>
            <person name="Adams M.D."/>
            <person name="White O."/>
            <person name="Clayton R.A."/>
            <person name="Kirkness E.F."/>
            <person name="Kerlavage A.R."/>
            <person name="Bult C.J."/>
            <person name="Tomb J.-F."/>
            <person name="Dougherty B.A."/>
            <person name="Merrick J.M."/>
            <person name="McKenney K."/>
            <person name="Sutton G.G."/>
            <person name="FitzHugh W."/>
            <person name="Fields C.A."/>
            <person name="Gocayne J.D."/>
            <person name="Scott J.D."/>
            <person name="Shirley R."/>
            <person name="Liu L.-I."/>
            <person name="Glodek A."/>
            <person name="Kelley J.M."/>
            <person name="Weidman J.F."/>
            <person name="Phillips C.A."/>
            <person name="Spriggs T."/>
            <person name="Hedblom E."/>
            <person name="Cotton M.D."/>
            <person name="Utterback T.R."/>
            <person name="Hanna M.C."/>
            <person name="Nguyen D.T."/>
            <person name="Saudek D.M."/>
            <person name="Brandon R.C."/>
            <person name="Fine L.D."/>
            <person name="Fritchman J.L."/>
            <person name="Fuhrmann J.L."/>
            <person name="Geoghagen N.S.M."/>
            <person name="Gnehm C.L."/>
            <person name="McDonald L.A."/>
            <person name="Small K.V."/>
            <person name="Fraser C.M."/>
            <person name="Smith H.O."/>
            <person name="Venter J.C."/>
        </authorList>
    </citation>
    <scope>NUCLEOTIDE SEQUENCE [LARGE SCALE GENOMIC DNA]</scope>
    <source>
        <strain>ATCC 51907 / DSM 11121 / KW20 / Rd</strain>
    </source>
</reference>
<reference key="2">
    <citation type="journal article" date="1996" name="Res. Microbiol.">
        <title>Novel PTS proteins revealed by bacterial genome sequencing: a unique fructose-specific phosphoryl transfer protein with two HPr-like domains in Haemophilus influenzae.</title>
        <authorList>
            <person name="Reizer J."/>
            <person name="Reizer A."/>
            <person name="Saier M.H. Jr."/>
        </authorList>
    </citation>
    <scope>FUNCTION</scope>
    <scope>DOMAIN STRUCTURE</scope>
</reference>
<organism>
    <name type="scientific">Haemophilus influenzae (strain ATCC 51907 / DSM 11121 / KW20 / Rd)</name>
    <dbReference type="NCBI Taxonomy" id="71421"/>
    <lineage>
        <taxon>Bacteria</taxon>
        <taxon>Pseudomonadati</taxon>
        <taxon>Pseudomonadota</taxon>
        <taxon>Gammaproteobacteria</taxon>
        <taxon>Pasteurellales</taxon>
        <taxon>Pasteurellaceae</taxon>
        <taxon>Haemophilus</taxon>
    </lineage>
</organism>
<name>PTFAH_HAEIN</name>
<sequence length="499" mass="53007">MLELSESNIHLNANAIDKQQAIEMAVSALVQAGNVENGYLQGMLARELQTSTFLGNGIAIPHGTLDTRLMVKKTGVQVFQFPQGIEWGEGNIAYVVIGIAARSDEHLSLLRQLTHVLSDEDTAAKLAKITDVAEFCAILMGETIDPFEIPAANISLDVNTQSLLTLVAINAGQLQVQSAVENRFISEVINNAALPLGKGLWVTDSVVGNVKNALAFSRAKTIFSHNGKAVKGVITVSAVGDQINPTLVRLLDDDVQTTLLNGNSTEILTALLGSSSDVETQSVEGAVVGTFTIRNEHGLHARPSANLVNEVKKFTSKITMQNLTRESEVVSAKSLMKIVALGVTQGHRLRFVAEGEDAKQAIESLGKAIANGLGENVSAVPPSEPDTIEIMGDQIHTPAVTEDDNLPANAIEAVFVIKNEQGLHARPSAILVNEVKKYNASVAVQNLDRNSQLVSAKSLMKIVALGVVKGTRLRFVATGEEAQQAIDGIGAVIESGLGE</sequence>
<feature type="chain" id="PRO_0000186520" description="Multiphosphoryl transfer protein">
    <location>
        <begin position="1"/>
        <end position="499"/>
    </location>
</feature>
<feature type="domain" description="PTS EIIA type-2" evidence="3">
    <location>
        <begin position="2"/>
        <end position="142"/>
    </location>
</feature>
<feature type="domain" description="HPr 1" evidence="4 8">
    <location>
        <begin position="286"/>
        <end position="376"/>
    </location>
</feature>
<feature type="domain" description="HPr 2" evidence="4 8">
    <location>
        <begin position="410"/>
        <end position="499"/>
    </location>
</feature>
<feature type="region of interest" description="M domain" evidence="8">
    <location>
        <begin position="155"/>
        <end position="285"/>
    </location>
</feature>
<feature type="region of interest" description="Linker" evidence="8">
    <location>
        <begin position="378"/>
        <end position="409"/>
    </location>
</feature>
<feature type="active site" description="Tele-phosphohistidine intermediate; for EIIA activity" evidence="3">
    <location>
        <position position="62"/>
    </location>
</feature>
<feature type="active site" description="Pros-phosphohistidine intermediate; for HPr 1 activity" evidence="4">
    <location>
        <position position="300"/>
    </location>
</feature>
<feature type="active site" description="Pros-phosphohistidine intermediate; for HPr 2 activity" evidence="4">
    <location>
        <position position="424"/>
    </location>
</feature>
<feature type="modified residue" description="Phosphohistidine; by HPr" evidence="7">
    <location>
        <position position="62"/>
    </location>
</feature>
<feature type="modified residue" description="Phosphohistidine" evidence="7">
    <location>
        <position position="300"/>
    </location>
</feature>
<feature type="modified residue" description="Phosphohistidine" evidence="7">
    <location>
        <position position="424"/>
    </location>
</feature>
<gene>
    <name type="primary">fruB</name>
    <name type="ordered locus">HI_0448</name>
</gene>
<evidence type="ECO:0000250" key="1">
    <source>
        <dbReference type="UniProtKB" id="P17127"/>
    </source>
</evidence>
<evidence type="ECO:0000250" key="2">
    <source>
        <dbReference type="UniProtKB" id="P69811"/>
    </source>
</evidence>
<evidence type="ECO:0000255" key="3">
    <source>
        <dbReference type="PROSITE-ProRule" id="PRU00417"/>
    </source>
</evidence>
<evidence type="ECO:0000255" key="4">
    <source>
        <dbReference type="PROSITE-ProRule" id="PRU00681"/>
    </source>
</evidence>
<evidence type="ECO:0000269" key="5">
    <source>
    </source>
</evidence>
<evidence type="ECO:0000303" key="6">
    <source>
    </source>
</evidence>
<evidence type="ECO:0000305" key="7"/>
<evidence type="ECO:0000305" key="8">
    <source>
    </source>
</evidence>
<comment type="function">
    <text evidence="2 8">The phosphoenolpyruvate-dependent sugar phosphotransferase system (sugar PTS), a major carbohydrate active transport system, catalyzes the phosphorylation of incoming sugar substrates concomitantly with their translocation across the cell membrane. The enzyme II FruAB PTS system is involved in fructose transport.</text>
</comment>
<comment type="subcellular location">
    <subcellularLocation>
        <location evidence="7">Cytoplasm</location>
    </subcellularLocation>
</comment>
<comment type="induction">
    <text evidence="1">Induced by fructose and repressed by FruR.</text>
</comment>
<comment type="domain">
    <text evidence="3 5">The PTS EIIA type-2 domain is phosphorylated by phospho-HPr on a histidyl residue. Then, it transfers the phosphoryl group to the PTS EIIB type-2 domain.</text>
</comment>
<comment type="domain">
    <text evidence="5">In contrast to classical PTS systems, the fructose-specific PTS has no requirement for HPr; FruB combines a IIA domain with two HPr domains.</text>
</comment>
<keyword id="KW-0963">Cytoplasm</keyword>
<keyword id="KW-0418">Kinase</keyword>
<keyword id="KW-0597">Phosphoprotein</keyword>
<keyword id="KW-0598">Phosphotransferase system</keyword>
<keyword id="KW-1185">Reference proteome</keyword>
<keyword id="KW-0677">Repeat</keyword>
<keyword id="KW-0762">Sugar transport</keyword>
<keyword id="KW-0808">Transferase</keyword>
<keyword id="KW-0813">Transport</keyword>
<protein>
    <recommendedName>
        <fullName evidence="6">Multiphosphoryl transfer protein</fullName>
        <shortName evidence="6">MTP</shortName>
    </recommendedName>
    <alternativeName>
        <fullName evidence="2">Diphosphoryl transfer protein</fullName>
        <shortName evidence="2">DTP</shortName>
    </alternativeName>
    <alternativeName>
        <fullName evidence="6">Phosphotransferase FPr protein</fullName>
    </alternativeName>
    <alternativeName>
        <fullName evidence="6">Pseudo-HPr</fullName>
    </alternativeName>
    <domain>
        <recommendedName>
            <fullName evidence="6">Phosphocarrier protein HPr</fullName>
            <shortName evidence="6">Protein H</shortName>
        </recommendedName>
    </domain>
    <domain>
        <recommendedName>
            <fullName evidence="6">PTS system fructose-specific EIIA component</fullName>
        </recommendedName>
        <alternativeName>
            <fullName evidence="6">EIIA-Fru</fullName>
        </alternativeName>
        <alternativeName>
            <fullName evidence="6">EIII-Fru</fullName>
        </alternativeName>
        <alternativeName>
            <fullName evidence="6">Fructose-specific phosphotransferase enzyme IIA component</fullName>
        </alternativeName>
    </domain>
</protein>
<dbReference type="EMBL" id="L42023">
    <property type="protein sequence ID" value="AAC22107.1"/>
    <property type="molecule type" value="Genomic_DNA"/>
</dbReference>
<dbReference type="PIR" id="B64069">
    <property type="entry name" value="B64069"/>
</dbReference>
<dbReference type="RefSeq" id="NP_438609.1">
    <property type="nucleotide sequence ID" value="NC_000907.1"/>
</dbReference>
<dbReference type="SMR" id="P44715"/>
<dbReference type="STRING" id="71421.HI_0448"/>
<dbReference type="DNASU" id="950651"/>
<dbReference type="EnsemblBacteria" id="AAC22107">
    <property type="protein sequence ID" value="AAC22107"/>
    <property type="gene ID" value="HI_0448"/>
</dbReference>
<dbReference type="KEGG" id="hin:HI_0448"/>
<dbReference type="PATRIC" id="fig|71421.8.peg.468"/>
<dbReference type="eggNOG" id="COG1925">
    <property type="taxonomic scope" value="Bacteria"/>
</dbReference>
<dbReference type="eggNOG" id="COG4668">
    <property type="taxonomic scope" value="Bacteria"/>
</dbReference>
<dbReference type="HOGENOM" id="CLU_046384_0_0_6"/>
<dbReference type="OrthoDB" id="1640042at2"/>
<dbReference type="PhylomeDB" id="P44715"/>
<dbReference type="BioCyc" id="HINF71421:G1GJ1-464-MONOMER"/>
<dbReference type="Proteomes" id="UP000000579">
    <property type="component" value="Chromosome"/>
</dbReference>
<dbReference type="GO" id="GO:0005737">
    <property type="term" value="C:cytoplasm"/>
    <property type="evidence" value="ECO:0007669"/>
    <property type="project" value="UniProtKB-SubCell"/>
</dbReference>
<dbReference type="GO" id="GO:0005886">
    <property type="term" value="C:plasma membrane"/>
    <property type="evidence" value="ECO:0000318"/>
    <property type="project" value="GO_Central"/>
</dbReference>
<dbReference type="GO" id="GO:0016301">
    <property type="term" value="F:kinase activity"/>
    <property type="evidence" value="ECO:0007669"/>
    <property type="project" value="UniProtKB-KW"/>
</dbReference>
<dbReference type="GO" id="GO:0090563">
    <property type="term" value="F:protein-phosphocysteine-sugar phosphotransferase activity"/>
    <property type="evidence" value="ECO:0000318"/>
    <property type="project" value="GO_Central"/>
</dbReference>
<dbReference type="GO" id="GO:0009401">
    <property type="term" value="P:phosphoenolpyruvate-dependent sugar phosphotransferase system"/>
    <property type="evidence" value="ECO:0000318"/>
    <property type="project" value="GO_Central"/>
</dbReference>
<dbReference type="CDD" id="cd00367">
    <property type="entry name" value="PTS-HPr_like"/>
    <property type="match status" value="2"/>
</dbReference>
<dbReference type="CDD" id="cd00211">
    <property type="entry name" value="PTS_IIA_fru"/>
    <property type="match status" value="1"/>
</dbReference>
<dbReference type="FunFam" id="3.40.930.10:FF:000006">
    <property type="entry name" value="Fructose-specific PTS system IIA component"/>
    <property type="match status" value="1"/>
</dbReference>
<dbReference type="Gene3D" id="3.30.1340.10">
    <property type="entry name" value="HPr-like"/>
    <property type="match status" value="2"/>
</dbReference>
<dbReference type="Gene3D" id="3.40.930.10">
    <property type="entry name" value="Mannitol-specific EII, Chain A"/>
    <property type="match status" value="1"/>
</dbReference>
<dbReference type="InterPro" id="IPR016258">
    <property type="entry name" value="FruB"/>
</dbReference>
<dbReference type="InterPro" id="IPR000032">
    <property type="entry name" value="HPr-like"/>
</dbReference>
<dbReference type="InterPro" id="IPR035895">
    <property type="entry name" value="HPr-like_sf"/>
</dbReference>
<dbReference type="InterPro" id="IPR016152">
    <property type="entry name" value="PTrfase/Anion_transptr"/>
</dbReference>
<dbReference type="InterPro" id="IPR002178">
    <property type="entry name" value="PTS_EIIA_type-2_dom"/>
</dbReference>
<dbReference type="InterPro" id="IPR001020">
    <property type="entry name" value="PTS_HPr_His_P_site"/>
</dbReference>
<dbReference type="InterPro" id="IPR002114">
    <property type="entry name" value="PTS_HPr_Ser_P_site"/>
</dbReference>
<dbReference type="InterPro" id="IPR050893">
    <property type="entry name" value="Sugar_PTS"/>
</dbReference>
<dbReference type="NCBIfam" id="NF008319">
    <property type="entry name" value="PRK11109.1"/>
    <property type="match status" value="1"/>
</dbReference>
<dbReference type="NCBIfam" id="NF010351">
    <property type="entry name" value="PRK13779.1"/>
    <property type="match status" value="1"/>
</dbReference>
<dbReference type="NCBIfam" id="TIGR01003">
    <property type="entry name" value="PTS_HPr_family"/>
    <property type="match status" value="2"/>
</dbReference>
<dbReference type="PANTHER" id="PTHR30181">
    <property type="entry name" value="MANNITOL PERMEASE IIC COMPONENT"/>
    <property type="match status" value="1"/>
</dbReference>
<dbReference type="PANTHER" id="PTHR30181:SF3">
    <property type="entry name" value="MULTIPHOSPHORYL TRANSFER PROTEIN"/>
    <property type="match status" value="1"/>
</dbReference>
<dbReference type="Pfam" id="PF00381">
    <property type="entry name" value="PTS-HPr"/>
    <property type="match status" value="2"/>
</dbReference>
<dbReference type="Pfam" id="PF00359">
    <property type="entry name" value="PTS_EIIA_2"/>
    <property type="match status" value="1"/>
</dbReference>
<dbReference type="PIRSF" id="PIRSF000690">
    <property type="entry name" value="Fruc_PTS_diPryltransf"/>
    <property type="match status" value="1"/>
</dbReference>
<dbReference type="PRINTS" id="PR00107">
    <property type="entry name" value="PHOSPHOCPHPR"/>
</dbReference>
<dbReference type="SUPFAM" id="SSF55594">
    <property type="entry name" value="HPr-like"/>
    <property type="match status" value="2"/>
</dbReference>
<dbReference type="SUPFAM" id="SSF55804">
    <property type="entry name" value="Phoshotransferase/anion transport protein"/>
    <property type="match status" value="2"/>
</dbReference>
<dbReference type="PROSITE" id="PS51094">
    <property type="entry name" value="PTS_EIIA_TYPE_2"/>
    <property type="match status" value="1"/>
</dbReference>
<dbReference type="PROSITE" id="PS00372">
    <property type="entry name" value="PTS_EIIA_TYPE_2_HIS"/>
    <property type="match status" value="1"/>
</dbReference>
<dbReference type="PROSITE" id="PS51350">
    <property type="entry name" value="PTS_HPR_DOM"/>
    <property type="match status" value="2"/>
</dbReference>
<dbReference type="PROSITE" id="PS00369">
    <property type="entry name" value="PTS_HPR_HIS"/>
    <property type="match status" value="2"/>
</dbReference>
<dbReference type="PROSITE" id="PS00589">
    <property type="entry name" value="PTS_HPR_SER"/>
    <property type="match status" value="2"/>
</dbReference>
<proteinExistence type="inferred from homology"/>
<accession>P44715</accession>